<dbReference type="EMBL" id="AP009377">
    <property type="protein sequence ID" value="BAG16680.1"/>
    <property type="molecule type" value="Genomic_DNA"/>
</dbReference>
<dbReference type="RefSeq" id="YP_001806682.1">
    <property type="nucleotide sequence ID" value="NC_010548.1"/>
</dbReference>
<dbReference type="SMR" id="B1VKG9"/>
<dbReference type="GeneID" id="6166634"/>
<dbReference type="KEGG" id="cjf:6166634"/>
<dbReference type="OrthoDB" id="1926060at2759"/>
<dbReference type="GO" id="GO:0009535">
    <property type="term" value="C:chloroplast thylakoid membrane"/>
    <property type="evidence" value="ECO:0007669"/>
    <property type="project" value="UniProtKB-SubCell"/>
</dbReference>
<dbReference type="GO" id="GO:0009523">
    <property type="term" value="C:photosystem II"/>
    <property type="evidence" value="ECO:0007669"/>
    <property type="project" value="UniProtKB-KW"/>
</dbReference>
<dbReference type="GO" id="GO:0016168">
    <property type="term" value="F:chlorophyll binding"/>
    <property type="evidence" value="ECO:0007669"/>
    <property type="project" value="UniProtKB-UniRule"/>
</dbReference>
<dbReference type="GO" id="GO:0045156">
    <property type="term" value="F:electron transporter, transferring electrons within the cyclic electron transport pathway of photosynthesis activity"/>
    <property type="evidence" value="ECO:0007669"/>
    <property type="project" value="InterPro"/>
</dbReference>
<dbReference type="GO" id="GO:0046872">
    <property type="term" value="F:metal ion binding"/>
    <property type="evidence" value="ECO:0007669"/>
    <property type="project" value="UniProtKB-KW"/>
</dbReference>
<dbReference type="GO" id="GO:0009772">
    <property type="term" value="P:photosynthetic electron transport in photosystem II"/>
    <property type="evidence" value="ECO:0007669"/>
    <property type="project" value="InterPro"/>
</dbReference>
<dbReference type="FunFam" id="1.10.10.670:FF:000001">
    <property type="entry name" value="Photosystem II CP43 reaction center protein"/>
    <property type="match status" value="1"/>
</dbReference>
<dbReference type="Gene3D" id="1.10.10.670">
    <property type="entry name" value="photosystem ii from thermosynechococcus elongatus"/>
    <property type="match status" value="1"/>
</dbReference>
<dbReference type="HAMAP" id="MF_01496">
    <property type="entry name" value="PSII_PsbC_CP43"/>
    <property type="match status" value="1"/>
</dbReference>
<dbReference type="InterPro" id="IPR000932">
    <property type="entry name" value="PS_antenna-like"/>
</dbReference>
<dbReference type="InterPro" id="IPR036001">
    <property type="entry name" value="PS_II_antenna-like_sf"/>
</dbReference>
<dbReference type="InterPro" id="IPR005869">
    <property type="entry name" value="PSII_PsbC"/>
</dbReference>
<dbReference type="InterPro" id="IPR044900">
    <property type="entry name" value="PSII_PsbC_sf"/>
</dbReference>
<dbReference type="NCBIfam" id="TIGR01153">
    <property type="entry name" value="psbC"/>
    <property type="match status" value="1"/>
</dbReference>
<dbReference type="Pfam" id="PF00421">
    <property type="entry name" value="PSII"/>
    <property type="match status" value="1"/>
</dbReference>
<dbReference type="SUPFAM" id="SSF161077">
    <property type="entry name" value="Photosystem II antenna protein-like"/>
    <property type="match status" value="1"/>
</dbReference>
<gene>
    <name evidence="1" type="primary">psbC</name>
</gene>
<proteinExistence type="inferred from homology"/>
<feature type="propeptide" id="PRO_0000431132" evidence="1">
    <location>
        <begin position="1"/>
        <end position="14"/>
    </location>
</feature>
<feature type="chain" id="PRO_0000361358" description="Photosystem II CP43 reaction center protein" evidence="1">
    <location>
        <begin position="15"/>
        <end position="473"/>
    </location>
</feature>
<feature type="transmembrane region" description="Helical" evidence="1">
    <location>
        <begin position="69"/>
        <end position="93"/>
    </location>
</feature>
<feature type="transmembrane region" description="Helical" evidence="1">
    <location>
        <begin position="134"/>
        <end position="155"/>
    </location>
</feature>
<feature type="transmembrane region" description="Helical" evidence="1">
    <location>
        <begin position="178"/>
        <end position="200"/>
    </location>
</feature>
<feature type="transmembrane region" description="Helical" evidence="1">
    <location>
        <begin position="255"/>
        <end position="275"/>
    </location>
</feature>
<feature type="transmembrane region" description="Helical" evidence="1">
    <location>
        <begin position="291"/>
        <end position="312"/>
    </location>
</feature>
<feature type="transmembrane region" description="Helical" evidence="1">
    <location>
        <begin position="447"/>
        <end position="471"/>
    </location>
</feature>
<feature type="binding site" evidence="1">
    <location>
        <position position="367"/>
    </location>
    <ligand>
        <name>[CaMn4O5] cluster</name>
        <dbReference type="ChEBI" id="CHEBI:189552"/>
    </ligand>
</feature>
<feature type="modified residue" description="N-acetylthreonine" evidence="1">
    <location>
        <position position="15"/>
    </location>
</feature>
<feature type="modified residue" description="Phosphothreonine" evidence="1">
    <location>
        <position position="15"/>
    </location>
</feature>
<name>PSBC_CRYJA</name>
<comment type="function">
    <text evidence="1">One of the components of the core complex of photosystem II (PSII). It binds chlorophyll and helps catalyze the primary light-induced photochemical processes of PSII. PSII is a light-driven water:plastoquinone oxidoreductase, using light energy to abstract electrons from H(2)O, generating O(2) and a proton gradient subsequently used for ATP formation.</text>
</comment>
<comment type="cofactor">
    <text evidence="1">Binds multiple chlorophylls and provides some of the ligands for the Ca-4Mn-5O cluster of the oxygen-evolving complex. It may also provide a ligand for a Cl- that is required for oxygen evolution. PSII binds additional chlorophylls, carotenoids and specific lipids.</text>
</comment>
<comment type="subunit">
    <text evidence="1">PSII is composed of 1 copy each of membrane proteins PsbA, PsbB, PsbC, PsbD, PsbE, PsbF, PsbH, PsbI, PsbJ, PsbK, PsbL, PsbM, PsbT, PsbX, PsbY, PsbZ, Psb30/Ycf12, at least 3 peripheral proteins of the oxygen-evolving complex and a large number of cofactors. It forms dimeric complexes.</text>
</comment>
<comment type="subcellular location">
    <subcellularLocation>
        <location evidence="1">Plastid</location>
        <location evidence="1">Chloroplast thylakoid membrane</location>
        <topology evidence="1">Multi-pass membrane protein</topology>
    </subcellularLocation>
</comment>
<comment type="similarity">
    <text evidence="1">Belongs to the PsbB/PsbC family. PsbC subfamily.</text>
</comment>
<geneLocation type="chloroplast"/>
<keyword id="KW-0007">Acetylation</keyword>
<keyword id="KW-0148">Chlorophyll</keyword>
<keyword id="KW-0150">Chloroplast</keyword>
<keyword id="KW-0157">Chromophore</keyword>
<keyword id="KW-0464">Manganese</keyword>
<keyword id="KW-0472">Membrane</keyword>
<keyword id="KW-0479">Metal-binding</keyword>
<keyword id="KW-0597">Phosphoprotein</keyword>
<keyword id="KW-0602">Photosynthesis</keyword>
<keyword id="KW-0604">Photosystem II</keyword>
<keyword id="KW-0934">Plastid</keyword>
<keyword id="KW-0793">Thylakoid</keyword>
<keyword id="KW-0812">Transmembrane</keyword>
<keyword id="KW-1133">Transmembrane helix</keyword>
<protein>
    <recommendedName>
        <fullName evidence="1">Photosystem II CP43 reaction center protein</fullName>
    </recommendedName>
    <alternativeName>
        <fullName evidence="1">PSII 43 kDa protein</fullName>
    </alternativeName>
    <alternativeName>
        <fullName evidence="1">Protein CP-43</fullName>
    </alternativeName>
</protein>
<sequence length="473" mass="51955">MKTLYSLRRFYPVETLFNGTLTLAGRDQETTGFAWWAGNARLINLSGKLLGAHVAHAGLIVFWAGAMNLFEVAHFVPEKPMYEQGLILLPHLATLGWGVGPGGEIVDTFPYFVSGVLHLISSAVLGFGGIYHALIGPETLEESFPFFGYVWKDRNKMTTILGIHLILLGVGAFLLVFKALYFGGIYDTWAPGGGDVRKITNLTLNPSTIFGYLLKSPFGGEGWIVSVDNLEDLIGGHVWLGSICIFGGIWHILTKPFAWARRAFVWSGEAYLSYSLAALSVFGFIACCFVWFNNTAYPSEFYGPTGPEASQAQAFTFLVRDQRLGASVGSAQGPTGLGKYLMRSPTGEIIFGGETMRFWDLRAPWLEPLRGPNGLDLSKLKKDIQPWQERRSAEYMTHAPLGSLNSVGGVATEINAVNYVSPRSWLATSHFVLGFFFFVGHLWHAGRARAAAAGFEKGIDRDFEPVLSMTPLN</sequence>
<accession>B1VKG9</accession>
<organism>
    <name type="scientific">Cryptomeria japonica</name>
    <name type="common">Japanese cedar</name>
    <name type="synonym">Cupressus japonica</name>
    <dbReference type="NCBI Taxonomy" id="3369"/>
    <lineage>
        <taxon>Eukaryota</taxon>
        <taxon>Viridiplantae</taxon>
        <taxon>Streptophyta</taxon>
        <taxon>Embryophyta</taxon>
        <taxon>Tracheophyta</taxon>
        <taxon>Spermatophyta</taxon>
        <taxon>Pinopsida</taxon>
        <taxon>Pinidae</taxon>
        <taxon>Conifers II</taxon>
        <taxon>Cupressales</taxon>
        <taxon>Cupressaceae</taxon>
        <taxon>Cryptomeria</taxon>
    </lineage>
</organism>
<reference key="1">
    <citation type="journal article" date="2008" name="BMC Plant Biol.">
        <title>Complete nucleotide sequence of the Cryptomeria japonica D. Don. chloroplast genome and comparative chloroplast genomics: diversified genomic structure of coniferous species.</title>
        <authorList>
            <person name="Hirao T."/>
            <person name="Watanabe A."/>
            <person name="Kurita M."/>
            <person name="Kondo T."/>
            <person name="Takata K."/>
        </authorList>
    </citation>
    <scope>NUCLEOTIDE SEQUENCE [LARGE SCALE GENOMIC DNA]</scope>
</reference>
<evidence type="ECO:0000255" key="1">
    <source>
        <dbReference type="HAMAP-Rule" id="MF_01496"/>
    </source>
</evidence>